<proteinExistence type="evidence at protein level"/>
<protein>
    <recommendedName>
        <fullName evidence="4">Collagen alpha-2(I) chain</fullName>
    </recommendedName>
    <alternativeName>
        <fullName evidence="1">Alpha-2 type I collagen</fullName>
    </alternativeName>
</protein>
<organism evidence="4">
    <name type="scientific">Neocnus dousman</name>
    <name type="common">Slow ground sloth</name>
    <dbReference type="NCBI Taxonomy" id="2546657"/>
    <lineage>
        <taxon>Eukaryota</taxon>
        <taxon>Metazoa</taxon>
        <taxon>Chordata</taxon>
        <taxon>Craniata</taxon>
        <taxon>Vertebrata</taxon>
        <taxon>Euteleostomi</taxon>
        <taxon>Mammalia</taxon>
        <taxon>Eutheria</taxon>
        <taxon>Xenarthra</taxon>
        <taxon>Pilosa</taxon>
        <taxon>Folivora</taxon>
        <taxon>Megalonychidae</taxon>
        <taxon>Neocnus</taxon>
    </lineage>
</organism>
<keyword id="KW-0903">Direct protein sequencing</keyword>
<keyword id="KW-0952">Extinct organism protein</keyword>
<keyword id="KW-0272">Extracellular matrix</keyword>
<keyword id="KW-0325">Glycoprotein</keyword>
<keyword id="KW-0379">Hydroxylation</keyword>
<keyword id="KW-0964">Secreted</keyword>
<sequence length="979" mass="87774">SGGFDFSFLPQPPQEKAGVGLGPGPMGLMGPRGPPGASGAPGPQGFGARGPAGPPGKAGEDGRPGERGVVGPQGARGFPGTPGLPGFKGIGLDGLKGQPGAPGVKGEPGAPGENGTGARGLPGERGRVGAPGPAGARGSDGSVGPVGPAGPIGSAGPPGFPGAPGPKGEGPVGNTGPSGPAGPRGEQGLPGVSGPVGPPGNPGANGLTGKGAAGLPGVAGAPGLPGPRGIPGPVGASGATGARGLVGEPGPAGSKGESGGKGEPGSAGPQGPPGSSGEEGKRGPNGEAGSTGPTGPPGLRGGPGSRGLPGADGRAGVIGPAGRGASGPAGVRGPSGDTGRPGEPGLMGARGLPGSPGNVGPAGKEGPVGLPGIDGRPGPIGPAGRGEAGNIGFPGPKGPAGDPGKKGHAGLAGNRGAPGPDGNNGAQGPPGLQGVQGGKGEQGPAGPPGFQGLPGPAGTTGEVGKPGERGIPGEFGLPGPAGPRGERGPPGESGAVGPSGAIGSRGPSGPPGPDGNKGEPGVVGAPGTAGPAGSGGPGERGAAGIPGGKGEKGETGLRGEVGTTGRDGARGAPGAVGAPGPAGEAGAAGPAGPAGPRGSPGERGEVGPAGPNGFAGPAGAAGQPGAKGERGTKGPKGENGIVGPTGPVGSAGPAGPNGPAGPAGSRGDGGPPGVTGFPGAAGRTGPPGPSGITGPPGPPGAAGKEGLRGPRGDQGPVGRTGETGAGGPPGFTGEKGPSGEPGTAGPPGTAGPQGLLGAPGILGLPGSRGERGLPGVAGAVGEPGPLGIGPPGARGPSGGDGLPGHKGERGYAGNAGPVGAAGAPGPHGSVGPAGKHGNRGEPGPVGSVGPVGALGPRGPSGPQGIRGDKGEPGDKGPRGLPGLKGHNGLQGLPGLAGQHGDQGSPGPVGPAGPRGPAGPSGPPGKDGRTGHPGAVGPAGIRGSQGSQGPSGPGPPGPPGPPGASGGGYDFGYEGDFYRA</sequence>
<evidence type="ECO:0000250" key="1">
    <source>
        <dbReference type="UniProtKB" id="P08123"/>
    </source>
</evidence>
<evidence type="ECO:0000256" key="2">
    <source>
        <dbReference type="SAM" id="MobiDB-lite"/>
    </source>
</evidence>
<evidence type="ECO:0000269" key="3">
    <source>
    </source>
</evidence>
<evidence type="ECO:0000303" key="4">
    <source>
    </source>
</evidence>
<evidence type="ECO:0000305" key="5"/>
<accession>C0HLH6</accession>
<reference evidence="5" key="1">
    <citation type="journal article" date="2019" name="Nat. Ecol. Evol.">
        <title>Palaeoproteomics resolves sloth relationships.</title>
        <authorList>
            <person name="Presslee S."/>
            <person name="Slater G.J."/>
            <person name="Pujos F."/>
            <person name="Forasiepi A.M."/>
            <person name="Fischer R."/>
            <person name="Molloy K."/>
            <person name="Mackie M."/>
            <person name="Olsen J.V."/>
            <person name="Kramarz A."/>
            <person name="Taglioretti M."/>
            <person name="Scaglia F."/>
            <person name="Lezcano M."/>
            <person name="Lanata J.L."/>
            <person name="Southon J."/>
            <person name="Feranec R."/>
            <person name="Bloch J."/>
            <person name="Hajduk A."/>
            <person name="Martin F.M."/>
            <person name="Salas Gismondi R."/>
            <person name="Reguero M."/>
            <person name="de Muizon C."/>
            <person name="Greenwood A."/>
            <person name="Chait B.T."/>
            <person name="Penkman K."/>
            <person name="Collins M."/>
            <person name="MacPhee R.D.E."/>
        </authorList>
    </citation>
    <scope>PROTEIN SEQUENCE</scope>
    <scope>TISSUE SPECIFICITY</scope>
    <scope>IDENTIFICATION BY MASS SPECTROMETRY</scope>
    <source>
        <tissue evidence="4">Bone</tissue>
    </source>
</reference>
<dbReference type="GO" id="GO:0031012">
    <property type="term" value="C:extracellular matrix"/>
    <property type="evidence" value="ECO:0007669"/>
    <property type="project" value="TreeGrafter"/>
</dbReference>
<dbReference type="GO" id="GO:0005615">
    <property type="term" value="C:extracellular space"/>
    <property type="evidence" value="ECO:0007669"/>
    <property type="project" value="TreeGrafter"/>
</dbReference>
<dbReference type="GO" id="GO:0030020">
    <property type="term" value="F:extracellular matrix structural constituent conferring tensile strength"/>
    <property type="evidence" value="ECO:0007669"/>
    <property type="project" value="TreeGrafter"/>
</dbReference>
<dbReference type="GO" id="GO:0030198">
    <property type="term" value="P:extracellular matrix organization"/>
    <property type="evidence" value="ECO:0007669"/>
    <property type="project" value="TreeGrafter"/>
</dbReference>
<dbReference type="InterPro" id="IPR008160">
    <property type="entry name" value="Collagen"/>
</dbReference>
<dbReference type="InterPro" id="IPR050149">
    <property type="entry name" value="Collagen_superfamily"/>
</dbReference>
<dbReference type="PANTHER" id="PTHR24023:SF1112">
    <property type="entry name" value="COL_CUTICLE_N DOMAIN-CONTAINING PROTEIN-RELATED"/>
    <property type="match status" value="1"/>
</dbReference>
<dbReference type="PANTHER" id="PTHR24023">
    <property type="entry name" value="COLLAGEN ALPHA"/>
    <property type="match status" value="1"/>
</dbReference>
<dbReference type="Pfam" id="PF01391">
    <property type="entry name" value="Collagen"/>
    <property type="match status" value="10"/>
</dbReference>
<name>CO1A2_NEODO</name>
<comment type="function">
    <text evidence="5">Type I collagen is a member of group I collagen (fibrillar forming collagen).</text>
</comment>
<comment type="subunit">
    <text evidence="1">Trimers of one alpha 2(I) and two alpha 1(I) chains. Interacts (via C-terminus) with TMEM131 (via PapD-L domain); the interaction is direct and is involved in assembly and TRAPPIII ER-to-Golgi transport complex-dependent secretion of collagen.</text>
</comment>
<comment type="subcellular location">
    <subcellularLocation>
        <location>Secreted</location>
    </subcellularLocation>
    <subcellularLocation>
        <location>Secreted</location>
        <location>Extracellular space</location>
    </subcellularLocation>
    <subcellularLocation>
        <location evidence="5">Secreted</location>
        <location evidence="5">Extracellular space</location>
        <location evidence="5">Extracellular matrix</location>
    </subcellularLocation>
</comment>
<comment type="tissue specificity">
    <text evidence="3">Expressed in bones.</text>
</comment>
<comment type="PTM">
    <text evidence="1">Prolines at the third position of the tripeptide repeating unit (G-X-Y) are hydroxylated in some or all of the chains.</text>
</comment>
<comment type="miscellaneous">
    <text evidence="3">These protein fragments were extracted from an ancient tibia bone collected in Haiti.</text>
</comment>
<comment type="similarity">
    <text evidence="5">Belongs to the fibrillar collagen family.</text>
</comment>
<feature type="chain" id="PRO_0000448449" description="Collagen alpha-2(I) chain">
    <location>
        <begin position="1"/>
        <end position="979"/>
    </location>
</feature>
<feature type="region of interest" description="Disordered" evidence="2">
    <location>
        <begin position="1"/>
        <end position="979"/>
    </location>
</feature>
<feature type="compositionally biased region" description="Low complexity" evidence="2">
    <location>
        <begin position="28"/>
        <end position="41"/>
    </location>
</feature>
<feature type="compositionally biased region" description="Low complexity" evidence="2">
    <location>
        <begin position="128"/>
        <end position="157"/>
    </location>
</feature>
<feature type="compositionally biased region" description="Gly residues" evidence="2">
    <location>
        <begin position="256"/>
        <end position="265"/>
    </location>
</feature>
<feature type="compositionally biased region" description="Low complexity" evidence="2">
    <location>
        <begin position="266"/>
        <end position="276"/>
    </location>
</feature>
<feature type="compositionally biased region" description="Gly residues" evidence="2">
    <location>
        <begin position="298"/>
        <end position="307"/>
    </location>
</feature>
<feature type="compositionally biased region" description="Gly residues" evidence="2">
    <location>
        <begin position="434"/>
        <end position="443"/>
    </location>
</feature>
<feature type="compositionally biased region" description="Low complexity" evidence="2">
    <location>
        <begin position="490"/>
        <end position="507"/>
    </location>
</feature>
<feature type="compositionally biased region" description="Low complexity" evidence="2">
    <location>
        <begin position="519"/>
        <end position="529"/>
    </location>
</feature>
<feature type="compositionally biased region" description="Gly residues" evidence="2">
    <location>
        <begin position="530"/>
        <end position="548"/>
    </location>
</feature>
<feature type="compositionally biased region" description="Low complexity" evidence="2">
    <location>
        <begin position="570"/>
        <end position="599"/>
    </location>
</feature>
<feature type="compositionally biased region" description="Low complexity" evidence="2">
    <location>
        <begin position="606"/>
        <end position="626"/>
    </location>
</feature>
<feature type="compositionally biased region" description="Basic and acidic residues" evidence="2">
    <location>
        <begin position="627"/>
        <end position="636"/>
    </location>
</feature>
<feature type="compositionally biased region" description="Low complexity" evidence="2">
    <location>
        <begin position="644"/>
        <end position="654"/>
    </location>
</feature>
<feature type="compositionally biased region" description="Gly residues" evidence="2">
    <location>
        <begin position="664"/>
        <end position="673"/>
    </location>
</feature>
<feature type="compositionally biased region" description="Low complexity" evidence="2">
    <location>
        <begin position="675"/>
        <end position="684"/>
    </location>
</feature>
<feature type="compositionally biased region" description="Gly residues" evidence="2">
    <location>
        <begin position="721"/>
        <end position="730"/>
    </location>
</feature>
<feature type="compositionally biased region" description="Low complexity" evidence="2">
    <location>
        <begin position="738"/>
        <end position="765"/>
    </location>
</feature>
<feature type="compositionally biased region" description="Low complexity" evidence="2">
    <location>
        <begin position="773"/>
        <end position="783"/>
    </location>
</feature>
<feature type="compositionally biased region" description="Gly residues" evidence="2">
    <location>
        <begin position="784"/>
        <end position="802"/>
    </location>
</feature>
<feature type="compositionally biased region" description="Low complexity" evidence="2">
    <location>
        <begin position="811"/>
        <end position="833"/>
    </location>
</feature>
<feature type="compositionally biased region" description="Low complexity" evidence="2">
    <location>
        <begin position="841"/>
        <end position="856"/>
    </location>
</feature>
<feature type="compositionally biased region" description="Basic and acidic residues" evidence="2">
    <location>
        <begin position="866"/>
        <end position="877"/>
    </location>
</feature>
<feature type="compositionally biased region" description="Pro residues" evidence="2">
    <location>
        <begin position="951"/>
        <end position="961"/>
    </location>
</feature>
<feature type="modified residue" description="4-hydroxyproline" evidence="1">
    <location>
        <position position="10"/>
    </location>
</feature>
<feature type="modified residue" description="4-hydroxyproline" evidence="1">
    <location>
        <position position="13"/>
    </location>
</feature>
<feature type="modified residue" description="4-hydroxyproline" evidence="1">
    <location>
        <position position="35"/>
    </location>
</feature>
<feature type="modified residue" description="4-hydroxyproline" evidence="1">
    <location>
        <position position="41"/>
    </location>
</feature>
<feature type="modified residue" description="5-hydroxylysine; alternate" evidence="1">
    <location>
        <position position="88"/>
    </location>
</feature>
<feature type="modified residue" description="4-hydroxyproline" evidence="1">
    <location>
        <position position="341"/>
    </location>
</feature>
<feature type="modified residue" description="4-hydroxyproline" evidence="1">
    <location>
        <position position="344"/>
    </location>
</feature>
<feature type="glycosylation site" description="O-linked (Gal...) hydroxylysine; alternate" evidence="1">
    <location>
        <position position="88"/>
    </location>
</feature>
<feature type="unsure residue" description="L or I" evidence="4">
    <location>
        <position position="9"/>
    </location>
</feature>
<feature type="unsure residue" description="L or I" evidence="4">
    <location>
        <position position="21"/>
    </location>
</feature>
<feature type="unsure residue" description="L or I" evidence="4">
    <location>
        <position position="28"/>
    </location>
</feature>
<feature type="unsure residue" description="L or I" evidence="4">
    <location>
        <position position="84"/>
    </location>
</feature>
<feature type="unsure residue" description="L or I" evidence="4">
    <location>
        <position position="92"/>
    </location>
</feature>
<feature type="unsure residue" description="L or I" evidence="4">
    <location>
        <position position="95"/>
    </location>
</feature>
<feature type="unsure residue" description="L or I" evidence="4">
    <location>
        <position position="121"/>
    </location>
</feature>
<feature type="unsure residue" description="L or I" evidence="4">
    <location>
        <position position="189"/>
    </location>
</feature>
<feature type="unsure residue" description="L or I" evidence="4">
    <location>
        <position position="207"/>
    </location>
</feature>
<feature type="unsure residue" description="L or I" evidence="4">
    <location>
        <position position="215"/>
    </location>
</feature>
<feature type="unsure residue" description="L or I" evidence="4">
    <location>
        <position position="224"/>
    </location>
</feature>
<feature type="unsure residue" description="L or I" evidence="4">
    <location>
        <position position="245"/>
    </location>
</feature>
<feature type="unsure residue" description="L or I" evidence="4">
    <location>
        <position position="299"/>
    </location>
</feature>
<feature type="unsure residue" description="L or I" evidence="4">
    <location>
        <position position="308"/>
    </location>
</feature>
<feature type="unsure residue" description="L or I" evidence="4">
    <location>
        <position position="346"/>
    </location>
</feature>
<feature type="unsure residue" description="L or I" evidence="4">
    <location>
        <position position="352"/>
    </location>
</feature>
<feature type="unsure residue" description="L or I" evidence="4">
    <location>
        <position position="370"/>
    </location>
</feature>
<feature type="unsure residue" description="L or I" evidence="4">
    <location>
        <position position="411"/>
    </location>
</feature>
<feature type="unsure residue" description="L or I" evidence="4">
    <location>
        <position position="432"/>
    </location>
</feature>
<feature type="unsure residue" description="L or I" evidence="4">
    <location>
        <position position="453"/>
    </location>
</feature>
<feature type="unsure residue" description="L or I" evidence="4">
    <location>
        <position position="477"/>
    </location>
</feature>
<feature type="unsure residue" description="L or I" evidence="4">
    <location>
        <position position="557"/>
    </location>
</feature>
<feature type="unsure residue" description="L or I" evidence="4">
    <location>
        <position position="707"/>
    </location>
</feature>
<feature type="unsure residue" description="L or I" evidence="4">
    <location>
        <position position="755"/>
    </location>
</feature>
<feature type="unsure residue" description="L or I" evidence="4">
    <location>
        <position position="756"/>
    </location>
</feature>
<feature type="unsure residue" description="L or I" evidence="4">
    <location>
        <position position="762"/>
    </location>
</feature>
<feature type="unsure residue" description="L or I" evidence="4">
    <location>
        <position position="764"/>
    </location>
</feature>
<feature type="unsure residue" description="L or I" evidence="4">
    <location>
        <position position="773"/>
    </location>
</feature>
<feature type="unsure residue" description="L or I" evidence="4">
    <location>
        <position position="786"/>
    </location>
</feature>
<feature type="unsure residue" description="L or I" evidence="4">
    <location>
        <position position="802"/>
    </location>
</feature>
<feature type="unsure residue" description="L or I" evidence="4">
    <location>
        <position position="854"/>
    </location>
</feature>
<feature type="unsure residue" description="L or I" evidence="4">
    <location>
        <position position="880"/>
    </location>
</feature>
<feature type="unsure residue" description="L or I" evidence="4">
    <location>
        <position position="883"/>
    </location>
</feature>
<feature type="unsure residue" description="L or I" evidence="4">
    <location>
        <position position="889"/>
    </location>
</feature>
<feature type="unsure residue" description="L or I" evidence="4">
    <location>
        <position position="892"/>
    </location>
</feature>
<feature type="unsure residue" description="L or I" evidence="4">
    <location>
        <position position="895"/>
    </location>
</feature>
<feature type="non-consecutive residues" evidence="4">
    <location>
        <begin position="17"/>
        <end position="18"/>
    </location>
</feature>
<feature type="non-consecutive residues" evidence="4">
    <location>
        <begin position="46"/>
        <end position="47"/>
    </location>
</feature>
<feature type="non-consecutive residues" evidence="4">
    <location>
        <begin position="62"/>
        <end position="63"/>
    </location>
</feature>
<feature type="non-consecutive residues" evidence="4">
    <location>
        <begin position="90"/>
        <end position="91"/>
    </location>
</feature>
<feature type="non-consecutive residues" evidence="4">
    <location>
        <begin position="115"/>
        <end position="116"/>
    </location>
</feature>
<feature type="non-consecutive residues" evidence="4">
    <location>
        <begin position="169"/>
        <end position="170"/>
    </location>
</feature>
<feature type="non-consecutive residues" evidence="4">
    <location>
        <begin position="209"/>
        <end position="210"/>
    </location>
</feature>
<feature type="non-consecutive residues" evidence="4">
    <location>
        <begin position="322"/>
        <end position="323"/>
    </location>
</feature>
<feature type="non-consecutive residues" evidence="4">
    <location>
        <begin position="384"/>
        <end position="385"/>
    </location>
</feature>
<feature type="non-consecutive residues" evidence="4">
    <location>
        <begin position="405"/>
        <end position="406"/>
    </location>
</feature>
<feature type="non-consecutive residues" evidence="4">
    <location>
        <begin position="536"/>
        <end position="537"/>
    </location>
</feature>
<feature type="non-consecutive residues" evidence="4">
    <location>
        <begin position="582"/>
        <end position="583"/>
    </location>
</feature>
<feature type="non-consecutive residues" evidence="4">
    <location>
        <begin position="788"/>
        <end position="789"/>
    </location>
</feature>
<feature type="non-consecutive residues" evidence="4">
    <location>
        <begin position="799"/>
        <end position="800"/>
    </location>
</feature>
<feature type="non-consecutive residues" evidence="4">
    <location>
        <begin position="952"/>
        <end position="953"/>
    </location>
</feature>
<feature type="non-terminal residue" evidence="4">
    <location>
        <position position="1"/>
    </location>
</feature>
<feature type="non-terminal residue" evidence="4">
    <location>
        <position position="979"/>
    </location>
</feature>